<keyword id="KW-1003">Cell membrane</keyword>
<keyword id="KW-0968">Cytoplasmic vesicle</keyword>
<keyword id="KW-1015">Disulfide bond</keyword>
<keyword id="KW-0407">Ion channel</keyword>
<keyword id="KW-0406">Ion transport</keyword>
<keyword id="KW-0472">Membrane</keyword>
<keyword id="KW-0915">Sodium</keyword>
<keyword id="KW-0894">Sodium channel</keyword>
<keyword id="KW-0739">Sodium transport</keyword>
<keyword id="KW-0812">Transmembrane</keyword>
<keyword id="KW-1133">Transmembrane helix</keyword>
<keyword id="KW-0813">Transport</keyword>
<protein>
    <recommendedName>
        <fullName evidence="3">Epithelial sodium channel subunit beta</fullName>
    </recommendedName>
    <alternativeName>
        <fullName>Amiloride-sensitive sodium channel subunit beta</fullName>
    </alternativeName>
    <alternativeName>
        <fullName>Beta-NaCH</fullName>
    </alternativeName>
    <alternativeName>
        <fullName>Epithelial Na(+) channel subunit beta</fullName>
        <shortName>Beta-ENaC</shortName>
    </alternativeName>
    <alternativeName>
        <fullName>Nonvoltage-gated sodium channel 1 subunit beta</fullName>
    </alternativeName>
    <alternativeName>
        <fullName>SCNEB</fullName>
    </alternativeName>
</protein>
<dbReference type="EMBL" id="AF153690">
    <property type="protein sequence ID" value="AAD40246.1"/>
    <property type="molecule type" value="mRNA"/>
</dbReference>
<dbReference type="SMR" id="Q9W754"/>
<dbReference type="GO" id="GO:0016324">
    <property type="term" value="C:apical plasma membrane"/>
    <property type="evidence" value="ECO:0000250"/>
    <property type="project" value="UniProtKB"/>
</dbReference>
<dbReference type="GO" id="GO:0030659">
    <property type="term" value="C:cytoplasmic vesicle membrane"/>
    <property type="evidence" value="ECO:0007669"/>
    <property type="project" value="UniProtKB-SubCell"/>
</dbReference>
<dbReference type="GO" id="GO:0005886">
    <property type="term" value="C:plasma membrane"/>
    <property type="evidence" value="ECO:0000250"/>
    <property type="project" value="UniProtKB"/>
</dbReference>
<dbReference type="GO" id="GO:0034706">
    <property type="term" value="C:sodium channel complex"/>
    <property type="evidence" value="ECO:0000250"/>
    <property type="project" value="UniProtKB"/>
</dbReference>
<dbReference type="GO" id="GO:0015280">
    <property type="term" value="F:ligand-gated sodium channel activity"/>
    <property type="evidence" value="ECO:0007669"/>
    <property type="project" value="InterPro"/>
</dbReference>
<dbReference type="GO" id="GO:0050891">
    <property type="term" value="P:multicellular organismal-level water homeostasis"/>
    <property type="evidence" value="ECO:0000250"/>
    <property type="project" value="UniProtKB"/>
</dbReference>
<dbReference type="GO" id="GO:0055078">
    <property type="term" value="P:sodium ion homeostasis"/>
    <property type="evidence" value="ECO:0000250"/>
    <property type="project" value="UniProtKB"/>
</dbReference>
<dbReference type="GO" id="GO:0035725">
    <property type="term" value="P:sodium ion transmembrane transport"/>
    <property type="evidence" value="ECO:0000250"/>
    <property type="project" value="UniProtKB"/>
</dbReference>
<dbReference type="FunFam" id="1.10.287.820:FF:000006">
    <property type="entry name" value="Amiloride-sensitive sodium channel subunit beta-2"/>
    <property type="match status" value="1"/>
</dbReference>
<dbReference type="Gene3D" id="2.60.470.10">
    <property type="entry name" value="Acid-sensing ion channels like domains"/>
    <property type="match status" value="1"/>
</dbReference>
<dbReference type="Gene3D" id="1.10.287.770">
    <property type="entry name" value="YojJ-like"/>
    <property type="match status" value="1"/>
</dbReference>
<dbReference type="InterPro" id="IPR001873">
    <property type="entry name" value="ENaC"/>
</dbReference>
<dbReference type="InterPro" id="IPR004724">
    <property type="entry name" value="ENaC_chordates"/>
</dbReference>
<dbReference type="InterPro" id="IPR020903">
    <property type="entry name" value="ENaC_CS"/>
</dbReference>
<dbReference type="NCBIfam" id="TIGR00859">
    <property type="entry name" value="ENaC"/>
    <property type="match status" value="1"/>
</dbReference>
<dbReference type="PANTHER" id="PTHR11690:SF18">
    <property type="entry name" value="AMILORIDE-SENSITIVE SODIUM CHANNEL SUBUNIT BETA"/>
    <property type="match status" value="1"/>
</dbReference>
<dbReference type="PANTHER" id="PTHR11690">
    <property type="entry name" value="AMILORIDE-SENSITIVE SODIUM CHANNEL-RELATED"/>
    <property type="match status" value="1"/>
</dbReference>
<dbReference type="Pfam" id="PF00858">
    <property type="entry name" value="ASC"/>
    <property type="match status" value="1"/>
</dbReference>
<dbReference type="PRINTS" id="PR01078">
    <property type="entry name" value="AMINACHANNEL"/>
</dbReference>
<dbReference type="PROSITE" id="PS01206">
    <property type="entry name" value="ASC"/>
    <property type="match status" value="1"/>
</dbReference>
<comment type="function">
    <text evidence="3">This is one of the three pore-forming subunits of the heterotrimeric epithelial sodium channel (ENaC), a critical regulator of sodium balance and fluid homeostasis. ENaC operates in epithelial tissues, where it mediates the electrodiffusion of sodium ions from extracellular fluid through the apical membrane of cells, with water following osmotically. It plays a key role in maintaining sodium homeostasis through electrogenic sodium reabsorption in the kidneys. Additionally, ENaC is essential for airway surface liquid homeostasis, which is crucial for proper mucus clearance.</text>
</comment>
<comment type="catalytic activity">
    <reaction evidence="3">
        <text>Na(+)(in) = Na(+)(out)</text>
        <dbReference type="Rhea" id="RHEA:34963"/>
        <dbReference type="ChEBI" id="CHEBI:29101"/>
    </reaction>
</comment>
<comment type="activity regulation">
    <text evidence="3">Originally identified and characterized by its inhibition by the diuretic drug amiloride.</text>
</comment>
<comment type="subunit">
    <text evidence="3">Component of the heterotrimeric epithelial sodium channel (ENaC) composed of an alpha/SCNN1A, a beta/SCNN1B and a gamma/SCNN1G subunit.</text>
</comment>
<comment type="subcellular location">
    <subcellularLocation>
        <location evidence="3">Apical cell membrane</location>
        <topology evidence="3">Multi-pass membrane protein</topology>
    </subcellularLocation>
    <subcellularLocation>
        <location evidence="2">Cytoplasmic vesicle membrane</location>
        <topology evidence="3">Multi-pass membrane protein</topology>
    </subcellularLocation>
</comment>
<comment type="similarity">
    <text evidence="4">Belongs to the amiloride-sensitive sodium channel (TC 1.A.6) family. SCNN1B subfamily.</text>
</comment>
<accession>Q9W754</accession>
<evidence type="ECO:0000250" key="1"/>
<evidence type="ECO:0000250" key="2">
    <source>
        <dbReference type="UniProtKB" id="P37090"/>
    </source>
</evidence>
<evidence type="ECO:0000250" key="3">
    <source>
        <dbReference type="UniProtKB" id="P51168"/>
    </source>
</evidence>
<evidence type="ECO:0000305" key="4"/>
<reference key="1">
    <citation type="submission" date="1999-05" db="EMBL/GenBank/DDBJ databases">
        <title>Rana catesbiana epithelial sodium channel (larval skin): beta subunit.</title>
        <authorList>
            <person name="Al-Khalili O.K."/>
            <person name="Stockand J.D."/>
            <person name="Eaton D.C."/>
        </authorList>
    </citation>
    <scope>NUCLEOTIDE SEQUENCE [MRNA]</scope>
    <source>
        <tissue>Skin</tissue>
    </source>
</reference>
<sequence length="273" mass="31214">NCYIFNWGQEGQELLESANPGADFGLKMVLDIDQKEYIPFLQSTAAARIILHQQRSFPFLKDLGIYAMPGTETSIAVLEDQTQHLEAPYSSCTVDGSDIPVANIYSKFNSSYSIQSCLRSCFQEIMVKYCKCAYYLFPLLNGAHYCNNQEDPDWVPCYYNIWDTVSHREQCINMCQQPCNDSNYKMTISMADWPSAAAEDWIFHVLSYEKDTSLDITVNRDGIMRLNIYFEEFNYRSISESPTTNVVWLLSNLGGQFGFWMGGSVLCIIEFGE</sequence>
<proteinExistence type="evidence at transcript level"/>
<gene>
    <name evidence="3" type="primary">SCNN1B</name>
</gene>
<name>SCNNB_AQUCT</name>
<feature type="chain" id="PRO_0000181273" description="Epithelial sodium channel subunit beta">
    <location>
        <begin position="1" status="less than"/>
        <end position="273" status="greater than"/>
    </location>
</feature>
<feature type="topological domain" description="Extracellular" evidence="1">
    <location>
        <begin position="1" status="less than"/>
        <end position="245"/>
    </location>
</feature>
<feature type="transmembrane region" description="Helical" evidence="1">
    <location>
        <begin position="246"/>
        <end position="273" status="greater than"/>
    </location>
</feature>
<feature type="disulfide bond" evidence="3">
    <location>
        <begin position="92"/>
        <end position="179"/>
    </location>
</feature>
<feature type="disulfide bond" evidence="3">
    <location>
        <begin position="117"/>
        <end position="175"/>
    </location>
</feature>
<feature type="disulfide bond" evidence="3">
    <location>
        <begin position="121"/>
        <end position="171"/>
    </location>
</feature>
<feature type="disulfide bond" evidence="3">
    <location>
        <begin position="130"/>
        <end position="157"/>
    </location>
</feature>
<feature type="disulfide bond" evidence="3">
    <location>
        <begin position="132"/>
        <end position="146"/>
    </location>
</feature>
<feature type="non-terminal residue">
    <location>
        <position position="1"/>
    </location>
</feature>
<feature type="non-terminal residue">
    <location>
        <position position="273"/>
    </location>
</feature>
<organism>
    <name type="scientific">Aquarana catesbeiana</name>
    <name type="common">American bullfrog</name>
    <name type="synonym">Rana catesbeiana</name>
    <dbReference type="NCBI Taxonomy" id="8400"/>
    <lineage>
        <taxon>Eukaryota</taxon>
        <taxon>Metazoa</taxon>
        <taxon>Chordata</taxon>
        <taxon>Craniata</taxon>
        <taxon>Vertebrata</taxon>
        <taxon>Euteleostomi</taxon>
        <taxon>Amphibia</taxon>
        <taxon>Batrachia</taxon>
        <taxon>Anura</taxon>
        <taxon>Neobatrachia</taxon>
        <taxon>Ranoidea</taxon>
        <taxon>Ranidae</taxon>
        <taxon>Aquarana</taxon>
    </lineage>
</organism>